<gene>
    <name type="primary">tbuD</name>
</gene>
<evidence type="ECO:0000255" key="1"/>
<evidence type="ECO:0000269" key="2">
    <source>
    </source>
</evidence>
<evidence type="ECO:0000305" key="3"/>
<protein>
    <recommendedName>
        <fullName>Phenol 2-monooxygenase</fullName>
        <ecNumber>1.14.13.7</ecNumber>
    </recommendedName>
    <alternativeName>
        <fullName>Phenol hydroxylase</fullName>
    </alternativeName>
</protein>
<sequence length="671" mass="72999">MTKYNEAYCDVLIVGAGPAGVMAAAHLLSYGTTARPHRVRIFDATKEVNGSDESTESLSTDVIADALNSGASGPEKDAASTTEDLPMLVTTLQVSDVLHDTGDDTKIAYRETATEQQVLLLADTTANTSSTMNPRSMCEAGCRFHQIYQGHCFPEYELDSERLRSVDGRAQVLEDEHETGQLRLERLGRPEELLELDEENSMSVVTNLKAAPYKFLMKDVDENFPGELSTSGGKTTSISADESAIDAALHAVWDADDLGAAWHLDEASGLRAVDWNAAQWFKSGQPWTPDAAKSLQEGRVFLAGDARHRHPPLTGIGKNTSIADCYNLTWKLLGVLLGVARADPARTYVAERVYIRMRAATDIAVDAEMESLAAKWITVQLTLSRSWISSAKEAERWDAVLRDSAMSASKPMWTTSDMRASFDAGLMGHGHAHDHVTPTIKEFASSSISRSISELASTSWWESRGWGNGGPFESLMEDARWTGAVESNCRYAAYDRDAPVLHEHVAWVTRFTSRARTAVLEAAVGQAHVVDCWDVGLVEPALDDLDSAGAGLHVAHHADQWPAQLDEAVWPRESLSDWRIVTDTSATGEGYQTSPREAPGDYADLNADNAKAHFNGQFAGHKAYGDAAAADGGGCHGRILVGPAVRGRHLHREIPLGEECQRAAQPLFKEV</sequence>
<feature type="initiator methionine" description="Removed" evidence="2">
    <location>
        <position position="1"/>
    </location>
</feature>
<feature type="chain" id="PRO_0000214047" description="Phenol 2-monooxygenase">
    <location>
        <begin position="2"/>
        <end position="671"/>
    </location>
</feature>
<feature type="binding site" evidence="1">
    <location>
        <begin position="10"/>
        <end position="43"/>
    </location>
    <ligand>
        <name>FAD</name>
        <dbReference type="ChEBI" id="CHEBI:57692"/>
    </ligand>
</feature>
<feature type="binding site" evidence="1">
    <location>
        <begin position="295"/>
        <end position="305"/>
    </location>
    <ligand>
        <name>FAD</name>
        <dbReference type="ChEBI" id="CHEBI:57692"/>
    </ligand>
</feature>
<reference key="1">
    <citation type="journal article" date="1992" name="J. Bacteriol.">
        <title>Complete nucleotide sequence of tbuD, the gene encoding phenol/cresol hydroxylase from Pseudomonas pickettii PKO1, and functional analysis of the encoded enzyme.</title>
        <authorList>
            <person name="Kukor J.J."/>
            <person name="Olsen R.H."/>
        </authorList>
    </citation>
    <scope>NUCLEOTIDE SEQUENCE [GENOMIC DNA]</scope>
    <scope>PROTEIN SEQUENCE OF 2-22</scope>
    <source>
        <strain>PKO1</strain>
    </source>
</reference>
<keyword id="KW-0058">Aromatic hydrocarbons catabolism</keyword>
<keyword id="KW-0963">Cytoplasm</keyword>
<keyword id="KW-0903">Direct protein sequencing</keyword>
<keyword id="KW-0274">FAD</keyword>
<keyword id="KW-0285">Flavoprotein</keyword>
<keyword id="KW-0503">Monooxygenase</keyword>
<keyword id="KW-0521">NADP</keyword>
<keyword id="KW-0560">Oxidoreductase</keyword>
<name>TBUD_RALPI</name>
<proteinExistence type="evidence at protein level"/>
<dbReference type="EC" id="1.14.13.7"/>
<dbReference type="EMBL" id="M98806">
    <property type="protein sequence ID" value="AAA25992.1"/>
    <property type="molecule type" value="Genomic_DNA"/>
</dbReference>
<dbReference type="PIR" id="A45730">
    <property type="entry name" value="A45730"/>
</dbReference>
<dbReference type="UniPathway" id="UPA00728"/>
<dbReference type="GO" id="GO:0005737">
    <property type="term" value="C:cytoplasm"/>
    <property type="evidence" value="ECO:0007669"/>
    <property type="project" value="UniProtKB-SubCell"/>
</dbReference>
<dbReference type="GO" id="GO:0071949">
    <property type="term" value="F:FAD binding"/>
    <property type="evidence" value="ECO:0007669"/>
    <property type="project" value="InterPro"/>
</dbReference>
<dbReference type="GO" id="GO:0018662">
    <property type="term" value="F:phenol 2-monooxygenase activity"/>
    <property type="evidence" value="ECO:0007669"/>
    <property type="project" value="UniProtKB-EC"/>
</dbReference>
<dbReference type="GO" id="GO:0019336">
    <property type="term" value="P:phenol-containing compound catabolic process"/>
    <property type="evidence" value="ECO:0007669"/>
    <property type="project" value="UniProtKB-UniPathway"/>
</dbReference>
<dbReference type="Gene3D" id="3.30.9.10">
    <property type="entry name" value="D-Amino Acid Oxidase, subunit A, domain 2"/>
    <property type="match status" value="1"/>
</dbReference>
<dbReference type="Gene3D" id="3.50.50.60">
    <property type="entry name" value="FAD/NAD(P)-binding domain"/>
    <property type="match status" value="2"/>
</dbReference>
<dbReference type="InterPro" id="IPR002938">
    <property type="entry name" value="FAD-bd"/>
</dbReference>
<dbReference type="InterPro" id="IPR036188">
    <property type="entry name" value="FAD/NAD-bd_sf"/>
</dbReference>
<dbReference type="InterPro" id="IPR050641">
    <property type="entry name" value="RIFMO-like"/>
</dbReference>
<dbReference type="PANTHER" id="PTHR43004:SF19">
    <property type="entry name" value="BINDING MONOOXYGENASE, PUTATIVE (JCVI)-RELATED"/>
    <property type="match status" value="1"/>
</dbReference>
<dbReference type="PANTHER" id="PTHR43004">
    <property type="entry name" value="TRK SYSTEM POTASSIUM UPTAKE PROTEIN"/>
    <property type="match status" value="1"/>
</dbReference>
<dbReference type="Pfam" id="PF01494">
    <property type="entry name" value="FAD_binding_3"/>
    <property type="match status" value="1"/>
</dbReference>
<dbReference type="PRINTS" id="PR00420">
    <property type="entry name" value="RNGMNOXGNASE"/>
</dbReference>
<dbReference type="SUPFAM" id="SSF51905">
    <property type="entry name" value="FAD/NAD(P)-binding domain"/>
    <property type="match status" value="1"/>
</dbReference>
<organism>
    <name type="scientific">Ralstonia pickettii</name>
    <name type="common">Burkholderia pickettii</name>
    <dbReference type="NCBI Taxonomy" id="329"/>
    <lineage>
        <taxon>Bacteria</taxon>
        <taxon>Pseudomonadati</taxon>
        <taxon>Pseudomonadota</taxon>
        <taxon>Betaproteobacteria</taxon>
        <taxon>Burkholderiales</taxon>
        <taxon>Burkholderiaceae</taxon>
        <taxon>Ralstonia</taxon>
    </lineage>
</organism>
<accession>Q01551</accession>
<comment type="function">
    <text>Hydroxylates phenol to catechol. Also acts on cresols.</text>
</comment>
<comment type="catalytic activity">
    <reaction>
        <text>phenol + NADPH + O2 + H(+) = catechol + NADP(+) + H2O</text>
        <dbReference type="Rhea" id="RHEA:17061"/>
        <dbReference type="ChEBI" id="CHEBI:15377"/>
        <dbReference type="ChEBI" id="CHEBI:15378"/>
        <dbReference type="ChEBI" id="CHEBI:15379"/>
        <dbReference type="ChEBI" id="CHEBI:15882"/>
        <dbReference type="ChEBI" id="CHEBI:18135"/>
        <dbReference type="ChEBI" id="CHEBI:57783"/>
        <dbReference type="ChEBI" id="CHEBI:58349"/>
        <dbReference type="EC" id="1.14.13.7"/>
    </reaction>
</comment>
<comment type="cofactor">
    <cofactor>
        <name>FAD</name>
        <dbReference type="ChEBI" id="CHEBI:57692"/>
    </cofactor>
</comment>
<comment type="pathway">
    <text>Aromatic compound metabolism; phenol degradation.</text>
</comment>
<comment type="subcellular location">
    <subcellularLocation>
        <location>Cytoplasm</location>
    </subcellularLocation>
</comment>
<comment type="similarity">
    <text evidence="3">Belongs to the PheA/TfdB FAD monooxygenase family.</text>
</comment>